<accession>A0RBL6</accession>
<dbReference type="EMBL" id="CP000485">
    <property type="protein sequence ID" value="ABK84609.1"/>
    <property type="molecule type" value="Genomic_DNA"/>
</dbReference>
<dbReference type="RefSeq" id="WP_000170325.1">
    <property type="nucleotide sequence ID" value="NC_008600.1"/>
</dbReference>
<dbReference type="SMR" id="A0RBL6"/>
<dbReference type="KEGG" id="btl:BALH_1259"/>
<dbReference type="HOGENOM" id="CLU_025113_0_0_9"/>
<dbReference type="UniPathway" id="UPA00031">
    <property type="reaction ID" value="UER00006"/>
</dbReference>
<dbReference type="GO" id="GO:0005737">
    <property type="term" value="C:cytoplasm"/>
    <property type="evidence" value="ECO:0007669"/>
    <property type="project" value="UniProtKB-SubCell"/>
</dbReference>
<dbReference type="GO" id="GO:0140096">
    <property type="term" value="F:catalytic activity, acting on a protein"/>
    <property type="evidence" value="ECO:0007669"/>
    <property type="project" value="UniProtKB-ARBA"/>
</dbReference>
<dbReference type="GO" id="GO:0004821">
    <property type="term" value="F:histidine-tRNA ligase activity"/>
    <property type="evidence" value="ECO:0007669"/>
    <property type="project" value="TreeGrafter"/>
</dbReference>
<dbReference type="GO" id="GO:0016740">
    <property type="term" value="F:transferase activity"/>
    <property type="evidence" value="ECO:0007669"/>
    <property type="project" value="UniProtKB-ARBA"/>
</dbReference>
<dbReference type="GO" id="GO:0006427">
    <property type="term" value="P:histidyl-tRNA aminoacylation"/>
    <property type="evidence" value="ECO:0007669"/>
    <property type="project" value="TreeGrafter"/>
</dbReference>
<dbReference type="GO" id="GO:0000105">
    <property type="term" value="P:L-histidine biosynthetic process"/>
    <property type="evidence" value="ECO:0007669"/>
    <property type="project" value="UniProtKB-UniRule"/>
</dbReference>
<dbReference type="CDD" id="cd00773">
    <property type="entry name" value="HisRS-like_core"/>
    <property type="match status" value="1"/>
</dbReference>
<dbReference type="FunFam" id="3.30.930.10:FF:000060">
    <property type="entry name" value="ATP phosphoribosyltransferase regulatory subunit"/>
    <property type="match status" value="1"/>
</dbReference>
<dbReference type="Gene3D" id="3.30.930.10">
    <property type="entry name" value="Bira Bifunctional Protein, Domain 2"/>
    <property type="match status" value="1"/>
</dbReference>
<dbReference type="HAMAP" id="MF_00125">
    <property type="entry name" value="HisZ"/>
    <property type="match status" value="1"/>
</dbReference>
<dbReference type="InterPro" id="IPR006195">
    <property type="entry name" value="aa-tRNA-synth_II"/>
</dbReference>
<dbReference type="InterPro" id="IPR045864">
    <property type="entry name" value="aa-tRNA-synth_II/BPL/LPL"/>
</dbReference>
<dbReference type="InterPro" id="IPR041715">
    <property type="entry name" value="HisRS-like_core"/>
</dbReference>
<dbReference type="InterPro" id="IPR004516">
    <property type="entry name" value="HisRS/HisZ"/>
</dbReference>
<dbReference type="InterPro" id="IPR004517">
    <property type="entry name" value="HisZ"/>
</dbReference>
<dbReference type="NCBIfam" id="TIGR00443">
    <property type="entry name" value="hisZ_biosyn_reg"/>
    <property type="match status" value="1"/>
</dbReference>
<dbReference type="NCBIfam" id="NF008938">
    <property type="entry name" value="PRK12292.1-6"/>
    <property type="match status" value="1"/>
</dbReference>
<dbReference type="PANTHER" id="PTHR43707:SF6">
    <property type="entry name" value="ATP PHOSPHORIBOSYLTRANSFERASE REGULATORY SUBUNIT"/>
    <property type="match status" value="1"/>
</dbReference>
<dbReference type="PANTHER" id="PTHR43707">
    <property type="entry name" value="HISTIDYL-TRNA SYNTHETASE"/>
    <property type="match status" value="1"/>
</dbReference>
<dbReference type="Pfam" id="PF13393">
    <property type="entry name" value="tRNA-synt_His"/>
    <property type="match status" value="1"/>
</dbReference>
<dbReference type="PIRSF" id="PIRSF001549">
    <property type="entry name" value="His-tRNA_synth"/>
    <property type="match status" value="1"/>
</dbReference>
<dbReference type="SUPFAM" id="SSF55681">
    <property type="entry name" value="Class II aaRS and biotin synthetases"/>
    <property type="match status" value="1"/>
</dbReference>
<dbReference type="PROSITE" id="PS50862">
    <property type="entry name" value="AA_TRNA_LIGASE_II"/>
    <property type="match status" value="1"/>
</dbReference>
<comment type="function">
    <text evidence="1">Required for the first step of histidine biosynthesis. May allow the feedback regulation of ATP phosphoribosyltransferase activity by histidine.</text>
</comment>
<comment type="pathway">
    <text evidence="1">Amino-acid biosynthesis; L-histidine biosynthesis; L-histidine from 5-phospho-alpha-D-ribose 1-diphosphate: step 1/9.</text>
</comment>
<comment type="subunit">
    <text evidence="1">Heteromultimer composed of HisG and HisZ subunits.</text>
</comment>
<comment type="subcellular location">
    <subcellularLocation>
        <location evidence="1">Cytoplasm</location>
    </subcellularLocation>
</comment>
<comment type="miscellaneous">
    <text>This function is generally fulfilled by the C-terminal part of HisG, which is missing in some bacteria such as this one.</text>
</comment>
<comment type="similarity">
    <text evidence="1">Belongs to the class-II aminoacyl-tRNA synthetase family. HisZ subfamily.</text>
</comment>
<protein>
    <recommendedName>
        <fullName evidence="1">ATP phosphoribosyltransferase regulatory subunit</fullName>
    </recommendedName>
</protein>
<feature type="chain" id="PRO_1000016246" description="ATP phosphoribosyltransferase regulatory subunit">
    <location>
        <begin position="1"/>
        <end position="420"/>
    </location>
</feature>
<reference key="1">
    <citation type="journal article" date="2007" name="J. Bacteriol.">
        <title>The complete genome sequence of Bacillus thuringiensis Al Hakam.</title>
        <authorList>
            <person name="Challacombe J.F."/>
            <person name="Altherr M.R."/>
            <person name="Xie G."/>
            <person name="Bhotika S.S."/>
            <person name="Brown N."/>
            <person name="Bruce D."/>
            <person name="Campbell C.S."/>
            <person name="Campbell M.L."/>
            <person name="Chen J."/>
            <person name="Chertkov O."/>
            <person name="Cleland C."/>
            <person name="Dimitrijevic M."/>
            <person name="Doggett N.A."/>
            <person name="Fawcett J.J."/>
            <person name="Glavina T."/>
            <person name="Goodwin L.A."/>
            <person name="Green L.D."/>
            <person name="Han C.S."/>
            <person name="Hill K.K."/>
            <person name="Hitchcock P."/>
            <person name="Jackson P.J."/>
            <person name="Keim P."/>
            <person name="Kewalramani A.R."/>
            <person name="Longmire J."/>
            <person name="Lucas S."/>
            <person name="Malfatti S."/>
            <person name="Martinez D."/>
            <person name="McMurry K."/>
            <person name="Meincke L.J."/>
            <person name="Misra M."/>
            <person name="Moseman B.L."/>
            <person name="Mundt M."/>
            <person name="Munk A.C."/>
            <person name="Okinaka R.T."/>
            <person name="Parson-Quintana B."/>
            <person name="Reilly L.P."/>
            <person name="Richardson P."/>
            <person name="Robinson D.L."/>
            <person name="Saunders E."/>
            <person name="Tapia R."/>
            <person name="Tesmer J.G."/>
            <person name="Thayer N."/>
            <person name="Thompson L.S."/>
            <person name="Tice H."/>
            <person name="Ticknor L.O."/>
            <person name="Wills P.L."/>
            <person name="Gilna P."/>
            <person name="Brettin T.S."/>
        </authorList>
    </citation>
    <scope>NUCLEOTIDE SEQUENCE [LARGE SCALE GENOMIC DNA]</scope>
    <source>
        <strain>Al Hakam</strain>
    </source>
</reference>
<gene>
    <name evidence="1" type="primary">hisZ</name>
    <name type="ordered locus">BALH_1259</name>
</gene>
<evidence type="ECO:0000255" key="1">
    <source>
        <dbReference type="HAMAP-Rule" id="MF_00125"/>
    </source>
</evidence>
<organism>
    <name type="scientific">Bacillus thuringiensis (strain Al Hakam)</name>
    <dbReference type="NCBI Taxonomy" id="412694"/>
    <lineage>
        <taxon>Bacteria</taxon>
        <taxon>Bacillati</taxon>
        <taxon>Bacillota</taxon>
        <taxon>Bacilli</taxon>
        <taxon>Bacillales</taxon>
        <taxon>Bacillaceae</taxon>
        <taxon>Bacillus</taxon>
        <taxon>Bacillus cereus group</taxon>
    </lineage>
</organism>
<sequence length="420" mass="48784">MTKWKRANPNGTRDYLFEECTLIEEVEQKLRRTFLERGYEEIRTPTIEFYDVFAFQSRPIDEEKMYKFFDEKGRIIVLRPDMTIPLARVVGTQRCDTPLKVTYSGNVFRANESLAGKYNEIVQSGIEVIGIDNVRAEIECVISVIQSLQKLKVQSFTIEIGQVQLYKCIVKKLSIHEEEEKVLRTYIESKNYASLSNFIRDKKLDRCDETVKLLEKLPRLFGNLEVIEEAEKLASSNEMKMAITRVKEIYEAIEKLGYGSYISIDLGMIQHLDYYTGVIFKGYIYEIGEEIVSGGRYDELIGNFGEMLPAVGLAVQVNQIVKALQEQQEPYERKRIDIMIHYELNRLAEAERLRNLLQKDGKKVALSLFSNLNDTFQFARKNQIVTVVEAKSESLVEYVWKEKWVVQKEGETSCVTFKLR</sequence>
<proteinExistence type="inferred from homology"/>
<keyword id="KW-0028">Amino-acid biosynthesis</keyword>
<keyword id="KW-0963">Cytoplasm</keyword>
<keyword id="KW-0368">Histidine biosynthesis</keyword>
<name>HISZ_BACAH</name>